<dbReference type="EMBL" id="LT708304">
    <property type="protein sequence ID" value="SIT99522.1"/>
    <property type="molecule type" value="Genomic_DNA"/>
</dbReference>
<dbReference type="RefSeq" id="NP_854581.1">
    <property type="nucleotide sequence ID" value="NC_002945.3"/>
</dbReference>
<dbReference type="RefSeq" id="WP_003404687.1">
    <property type="nucleotide sequence ID" value="NC_002945.4"/>
</dbReference>
<dbReference type="SMR" id="P64756"/>
<dbReference type="KEGG" id="mbo:BQ2027_MB0924"/>
<dbReference type="PATRIC" id="fig|233413.5.peg.1005"/>
<dbReference type="Proteomes" id="UP000001419">
    <property type="component" value="Chromosome"/>
</dbReference>
<dbReference type="GO" id="GO:0005886">
    <property type="term" value="C:plasma membrane"/>
    <property type="evidence" value="ECO:0007669"/>
    <property type="project" value="UniProtKB-SubCell"/>
</dbReference>
<keyword id="KW-1003">Cell membrane</keyword>
<keyword id="KW-0472">Membrane</keyword>
<keyword id="KW-1185">Reference proteome</keyword>
<keyword id="KW-0812">Transmembrane</keyword>
<keyword id="KW-1133">Transmembrane helix</keyword>
<comment type="function">
    <text evidence="1">Required for wild-type expression of ArfA and ammonia secretion.</text>
</comment>
<comment type="subcellular location">
    <subcellularLocation>
        <location evidence="3">Cell membrane</location>
        <topology evidence="3">Single-pass membrane protein</topology>
    </subcellularLocation>
</comment>
<comment type="similarity">
    <text evidence="3">Belongs to the ArfB membrane protein family.</text>
</comment>
<feature type="chain" id="PRO_0000014084" description="Uncharacterized membrane protein ArfB">
    <location>
        <begin position="1"/>
        <end position="50"/>
    </location>
</feature>
<feature type="transmembrane region" description="Helical" evidence="2">
    <location>
        <begin position="9"/>
        <end position="29"/>
    </location>
</feature>
<proteinExistence type="inferred from homology"/>
<name>ARFB_MYCBO</name>
<evidence type="ECO:0000250" key="1"/>
<evidence type="ECO:0000255" key="2"/>
<evidence type="ECO:0000305" key="3"/>
<accession>P64756</accession>
<accession>A0A1R3XYV4</accession>
<accession>Q10558</accession>
<accession>X2BGD0</accession>
<protein>
    <recommendedName>
        <fullName>Uncharacterized membrane protein ArfB</fullName>
    </recommendedName>
</protein>
<reference key="1">
    <citation type="journal article" date="2003" name="Proc. Natl. Acad. Sci. U.S.A.">
        <title>The complete genome sequence of Mycobacterium bovis.</title>
        <authorList>
            <person name="Garnier T."/>
            <person name="Eiglmeier K."/>
            <person name="Camus J.-C."/>
            <person name="Medina N."/>
            <person name="Mansoor H."/>
            <person name="Pryor M."/>
            <person name="Duthoy S."/>
            <person name="Grondin S."/>
            <person name="Lacroix C."/>
            <person name="Monsempe C."/>
            <person name="Simon S."/>
            <person name="Harris B."/>
            <person name="Atkin R."/>
            <person name="Doggett J."/>
            <person name="Mayes R."/>
            <person name="Keating L."/>
            <person name="Wheeler P.R."/>
            <person name="Parkhill J."/>
            <person name="Barrell B.G."/>
            <person name="Cole S.T."/>
            <person name="Gordon S.V."/>
            <person name="Hewinson R.G."/>
        </authorList>
    </citation>
    <scope>NUCLEOTIDE SEQUENCE [LARGE SCALE GENOMIC DNA]</scope>
    <source>
        <strain>ATCC BAA-935 / AF2122/97</strain>
    </source>
</reference>
<reference key="2">
    <citation type="journal article" date="2017" name="Genome Announc.">
        <title>Updated reference genome sequence and annotation of Mycobacterium bovis AF2122/97.</title>
        <authorList>
            <person name="Malone K.M."/>
            <person name="Farrell D."/>
            <person name="Stuber T.P."/>
            <person name="Schubert O.T."/>
            <person name="Aebersold R."/>
            <person name="Robbe-Austerman S."/>
            <person name="Gordon S.V."/>
        </authorList>
    </citation>
    <scope>NUCLEOTIDE SEQUENCE [LARGE SCALE GENOMIC DNA]</scope>
    <scope>GENOME REANNOTATION</scope>
    <source>
        <strain>ATCC BAA-935 / AF2122/97</strain>
    </source>
</reference>
<sequence>MDFVIQWSCYLLAFLGGSAVAWVVVTLSIKRASRDEGAAEAPSAAETGAQ</sequence>
<organism>
    <name type="scientific">Mycobacterium bovis (strain ATCC BAA-935 / AF2122/97)</name>
    <dbReference type="NCBI Taxonomy" id="233413"/>
    <lineage>
        <taxon>Bacteria</taxon>
        <taxon>Bacillati</taxon>
        <taxon>Actinomycetota</taxon>
        <taxon>Actinomycetes</taxon>
        <taxon>Mycobacteriales</taxon>
        <taxon>Mycobacteriaceae</taxon>
        <taxon>Mycobacterium</taxon>
        <taxon>Mycobacterium tuberculosis complex</taxon>
    </lineage>
</organism>
<gene>
    <name type="primary">arfB</name>
    <name type="ordered locus">BQ2027_MB0924</name>
</gene>